<proteinExistence type="evidence at protein level"/>
<evidence type="ECO:0000256" key="1">
    <source>
        <dbReference type="SAM" id="MobiDB-lite"/>
    </source>
</evidence>
<evidence type="ECO:0000269" key="2">
    <source>
    </source>
</evidence>
<evidence type="ECO:0000269" key="3">
    <source>
    </source>
</evidence>
<evidence type="ECO:0000303" key="4">
    <source>
    </source>
</evidence>
<evidence type="ECO:0000303" key="5">
    <source>
    </source>
</evidence>
<evidence type="ECO:0000305" key="6"/>
<evidence type="ECO:0000312" key="7">
    <source>
        <dbReference type="EMBL" id="ABA12136.1"/>
    </source>
</evidence>
<reference evidence="7" key="1">
    <citation type="journal article" date="2006" name="BMC Genomics">
        <title>Comparative salivary gland transcriptomics of sandfly vectors of visceral leishmaniasis.</title>
        <authorList>
            <person name="Anderson J.M."/>
            <person name="Oliveira F."/>
            <person name="Kamhawi S."/>
            <person name="Mans B.J."/>
            <person name="Reynoso D."/>
            <person name="Seitz A.E."/>
            <person name="Lawyer P."/>
            <person name="Garfield M."/>
            <person name="Pham M."/>
            <person name="Valenzuela J.G."/>
        </authorList>
    </citation>
    <scope>NUCLEOTIDE SEQUENCE [MRNA]</scope>
    <scope>PROTEIN SEQUENCE OF 19-36</scope>
    <scope>TISSUE SPECIFICITY</scope>
</reference>
<reference evidence="6" key="2">
    <citation type="journal article" date="2020" name="Parasit. Vectors">
        <title>Interactions between host biogenic amines and sand fly salivary yellow-related proteins.</title>
        <authorList>
            <person name="Spitzova T."/>
            <person name="Sumova P."/>
            <person name="Volfova V."/>
            <person name="Polanska N."/>
            <person name="Poctova L."/>
            <person name="Volf P."/>
        </authorList>
    </citation>
    <scope>FUNCTION</scope>
</reference>
<organism>
    <name type="scientific">Phlebotomus argentipes</name>
    <name type="common">Phlebotomine sand fly</name>
    <dbReference type="NCBI Taxonomy" id="94469"/>
    <lineage>
        <taxon>Eukaryota</taxon>
        <taxon>Metazoa</taxon>
        <taxon>Ecdysozoa</taxon>
        <taxon>Arthropoda</taxon>
        <taxon>Hexapoda</taxon>
        <taxon>Insecta</taxon>
        <taxon>Pterygota</taxon>
        <taxon>Neoptera</taxon>
        <taxon>Endopterygota</taxon>
        <taxon>Diptera</taxon>
        <taxon>Nematocera</taxon>
        <taxon>Psychodoidea</taxon>
        <taxon>Psychodidae</taxon>
        <taxon>Phlebotomus</taxon>
        <taxon>Euphlebotomus</taxon>
    </lineage>
</organism>
<sequence>MKWFLFLLSTIFVQGILGYHVEREYAWRNVTFEGVNPSSYNVLHSIPTGFAYDAETQKLFVAVPRRYPQVPHTLTEIERKKHPERSPPLSKFSGKSSKDLISIYQPVIDECRRLWVVDVGMVDYKEGQPKYRKQNPAIIAFDLTKENYPEVDRYELPAEVVKNPLSFGCFAVDVINPKGGCSDTFLYITNYEENTIVVYDKKNKASWKVSHDSFKPEKDVNIVLDGGKKYSYKVGIFGITLGDREATGNRMAYYLAGSSTKLYKVSTGALKKKGARFDPIRIGDRGPYTEAITLVYDPKTKVIFFAESITRQVSCWNTQTPLDSNHTDVIYSDARFLFGTDISVDSNSTLWVMANGHPPVDDPDIVNNEFYKPQIRLLYVDTRKSIRRTRCDVNGNKP</sequence>
<protein>
    <recommendedName>
        <fullName evidence="6">Yellow-related salivary protein SP04</fullName>
    </recommendedName>
    <alternativeName>
        <fullName evidence="4 5">PagSP04</fullName>
    </alternativeName>
</protein>
<accession>Q0ZSU5</accession>
<keyword id="KW-0903">Direct protein sequencing</keyword>
<keyword id="KW-0964">Secreted</keyword>
<keyword id="KW-0732">Signal</keyword>
<comment type="function">
    <text evidence="3 6">Probably modulates blood feeding of sand flies on vertebrate species by binding and sequestering different mediators involved in the host response (Probable). Binds biogenic amines (PubMed:32381071). Binds serotonin with high affinity (PubMed:32381071). Binds histamine with low affinity (PubMed:32381071).</text>
</comment>
<comment type="subcellular location">
    <subcellularLocation>
        <location evidence="6">Secreted</location>
    </subcellularLocation>
</comment>
<comment type="tissue specificity">
    <text evidence="2">Female salivary gland (at protein level).</text>
</comment>
<comment type="similarity">
    <text evidence="6">Belongs to the major royal jelly protein family.</text>
</comment>
<dbReference type="EMBL" id="DQ136151">
    <property type="protein sequence ID" value="ABA12136.1"/>
    <property type="molecule type" value="mRNA"/>
</dbReference>
<dbReference type="SMR" id="Q0ZSU5"/>
<dbReference type="GO" id="GO:0005576">
    <property type="term" value="C:extracellular region"/>
    <property type="evidence" value="ECO:0007669"/>
    <property type="project" value="UniProtKB-SubCell"/>
</dbReference>
<dbReference type="Gene3D" id="2.120.10.30">
    <property type="entry name" value="TolB, C-terminal domain"/>
    <property type="match status" value="1"/>
</dbReference>
<dbReference type="InterPro" id="IPR011042">
    <property type="entry name" value="6-blade_b-propeller_TolB-like"/>
</dbReference>
<dbReference type="InterPro" id="IPR017996">
    <property type="entry name" value="Royal_jelly/protein_yellow"/>
</dbReference>
<dbReference type="PANTHER" id="PTHR10009">
    <property type="entry name" value="PROTEIN YELLOW-RELATED"/>
    <property type="match status" value="1"/>
</dbReference>
<dbReference type="PANTHER" id="PTHR10009:SF11">
    <property type="entry name" value="RH54244P"/>
    <property type="match status" value="1"/>
</dbReference>
<dbReference type="Pfam" id="PF03022">
    <property type="entry name" value="MRJP"/>
    <property type="match status" value="1"/>
</dbReference>
<dbReference type="SUPFAM" id="SSF75011">
    <property type="entry name" value="3-carboxy-cis,cis-mucoante lactonizing enzyme"/>
    <property type="match status" value="1"/>
</dbReference>
<name>SP04_PHLAR</name>
<feature type="signal peptide" evidence="2">
    <location>
        <begin position="1"/>
        <end position="18"/>
    </location>
</feature>
<feature type="chain" id="PRO_5004179529" description="Yellow-related salivary protein SP04" evidence="6">
    <location>
        <begin position="19"/>
        <end position="398"/>
    </location>
</feature>
<feature type="region of interest" description="Disordered" evidence="1">
    <location>
        <begin position="73"/>
        <end position="94"/>
    </location>
</feature>
<feature type="compositionally biased region" description="Basic and acidic residues" evidence="1">
    <location>
        <begin position="75"/>
        <end position="85"/>
    </location>
</feature>